<keyword id="KW-0687">Ribonucleoprotein</keyword>
<keyword id="KW-0689">Ribosomal protein</keyword>
<keyword id="KW-0694">RNA-binding</keyword>
<keyword id="KW-0699">rRNA-binding</keyword>
<protein>
    <recommendedName>
        <fullName evidence="1">Large ribosomal subunit protein bL20</fullName>
    </recommendedName>
    <alternativeName>
        <fullName evidence="2">50S ribosomal protein L20</fullName>
    </alternativeName>
</protein>
<sequence length="119" mass="13963">MARVKYGKVTRARRKRWIKLAKGYFGTKKSSYKKAHEQVIRSMAYAFIGRKERKRDFRSLWIVRINAAVRPEGLSYSTFMHGLKLANININRKMLSELAINNSEEFKQIVQQAKKALNK</sequence>
<gene>
    <name evidence="1" type="primary">rplT</name>
    <name type="ordered locus">MCAP_0203</name>
</gene>
<accession>Q2SSS3</accession>
<reference key="1">
    <citation type="submission" date="2005-09" db="EMBL/GenBank/DDBJ databases">
        <authorList>
            <person name="Glass J.I."/>
            <person name="Lartigue C."/>
            <person name="Pfannkoch C."/>
            <person name="Baden-Tillson H."/>
            <person name="Smith H.O."/>
            <person name="Venter J.C."/>
            <person name="Roske K."/>
            <person name="Wise K.S."/>
            <person name="Calcutt M.J."/>
            <person name="Nelson W.C."/>
            <person name="Nierman W.C."/>
        </authorList>
    </citation>
    <scope>NUCLEOTIDE SEQUENCE [LARGE SCALE GENOMIC DNA]</scope>
    <source>
        <strain>California kid / ATCC 27343 / NCTC 10154</strain>
    </source>
</reference>
<name>RL20_MYCCT</name>
<feature type="chain" id="PRO_0000243700" description="Large ribosomal subunit protein bL20">
    <location>
        <begin position="1"/>
        <end position="119"/>
    </location>
</feature>
<dbReference type="EMBL" id="CP000123">
    <property type="protein sequence ID" value="ABC01370.1"/>
    <property type="molecule type" value="Genomic_DNA"/>
</dbReference>
<dbReference type="RefSeq" id="WP_011387092.1">
    <property type="nucleotide sequence ID" value="NC_007633.1"/>
</dbReference>
<dbReference type="SMR" id="Q2SSS3"/>
<dbReference type="GeneID" id="93426592"/>
<dbReference type="KEGG" id="mcp:MCAP_0203"/>
<dbReference type="HOGENOM" id="CLU_123265_0_1_14"/>
<dbReference type="PhylomeDB" id="Q2SSS3"/>
<dbReference type="Proteomes" id="UP000001928">
    <property type="component" value="Chromosome"/>
</dbReference>
<dbReference type="GO" id="GO:1990904">
    <property type="term" value="C:ribonucleoprotein complex"/>
    <property type="evidence" value="ECO:0007669"/>
    <property type="project" value="UniProtKB-KW"/>
</dbReference>
<dbReference type="GO" id="GO:0005840">
    <property type="term" value="C:ribosome"/>
    <property type="evidence" value="ECO:0007669"/>
    <property type="project" value="UniProtKB-KW"/>
</dbReference>
<dbReference type="GO" id="GO:0019843">
    <property type="term" value="F:rRNA binding"/>
    <property type="evidence" value="ECO:0007669"/>
    <property type="project" value="UniProtKB-UniRule"/>
</dbReference>
<dbReference type="GO" id="GO:0003735">
    <property type="term" value="F:structural constituent of ribosome"/>
    <property type="evidence" value="ECO:0007669"/>
    <property type="project" value="InterPro"/>
</dbReference>
<dbReference type="GO" id="GO:0000027">
    <property type="term" value="P:ribosomal large subunit assembly"/>
    <property type="evidence" value="ECO:0007669"/>
    <property type="project" value="UniProtKB-UniRule"/>
</dbReference>
<dbReference type="GO" id="GO:0006412">
    <property type="term" value="P:translation"/>
    <property type="evidence" value="ECO:0007669"/>
    <property type="project" value="InterPro"/>
</dbReference>
<dbReference type="CDD" id="cd07026">
    <property type="entry name" value="Ribosomal_L20"/>
    <property type="match status" value="1"/>
</dbReference>
<dbReference type="FunFam" id="1.10.1900.20:FF:000001">
    <property type="entry name" value="50S ribosomal protein L20"/>
    <property type="match status" value="1"/>
</dbReference>
<dbReference type="Gene3D" id="6.10.160.10">
    <property type="match status" value="1"/>
</dbReference>
<dbReference type="Gene3D" id="1.10.1900.20">
    <property type="entry name" value="Ribosomal protein L20"/>
    <property type="match status" value="1"/>
</dbReference>
<dbReference type="HAMAP" id="MF_00382">
    <property type="entry name" value="Ribosomal_bL20"/>
    <property type="match status" value="1"/>
</dbReference>
<dbReference type="InterPro" id="IPR005813">
    <property type="entry name" value="Ribosomal_bL20"/>
</dbReference>
<dbReference type="InterPro" id="IPR049946">
    <property type="entry name" value="RIBOSOMAL_L20_CS"/>
</dbReference>
<dbReference type="InterPro" id="IPR035566">
    <property type="entry name" value="Ribosomal_protein_bL20_C"/>
</dbReference>
<dbReference type="NCBIfam" id="TIGR01032">
    <property type="entry name" value="rplT_bact"/>
    <property type="match status" value="1"/>
</dbReference>
<dbReference type="PANTHER" id="PTHR10986">
    <property type="entry name" value="39S RIBOSOMAL PROTEIN L20"/>
    <property type="match status" value="1"/>
</dbReference>
<dbReference type="Pfam" id="PF00453">
    <property type="entry name" value="Ribosomal_L20"/>
    <property type="match status" value="1"/>
</dbReference>
<dbReference type="PRINTS" id="PR00062">
    <property type="entry name" value="RIBOSOMALL20"/>
</dbReference>
<dbReference type="SUPFAM" id="SSF74731">
    <property type="entry name" value="Ribosomal protein L20"/>
    <property type="match status" value="1"/>
</dbReference>
<dbReference type="PROSITE" id="PS00937">
    <property type="entry name" value="RIBOSOMAL_L20"/>
    <property type="match status" value="1"/>
</dbReference>
<comment type="function">
    <text evidence="1">Binds directly to 23S ribosomal RNA and is necessary for the in vitro assembly process of the 50S ribosomal subunit. It is not involved in the protein synthesizing functions of that subunit.</text>
</comment>
<comment type="similarity">
    <text evidence="1">Belongs to the bacterial ribosomal protein bL20 family.</text>
</comment>
<proteinExistence type="inferred from homology"/>
<evidence type="ECO:0000255" key="1">
    <source>
        <dbReference type="HAMAP-Rule" id="MF_00382"/>
    </source>
</evidence>
<evidence type="ECO:0000305" key="2"/>
<organism>
    <name type="scientific">Mycoplasma capricolum subsp. capricolum (strain California kid / ATCC 27343 / NCTC 10154)</name>
    <dbReference type="NCBI Taxonomy" id="340047"/>
    <lineage>
        <taxon>Bacteria</taxon>
        <taxon>Bacillati</taxon>
        <taxon>Mycoplasmatota</taxon>
        <taxon>Mollicutes</taxon>
        <taxon>Mycoplasmataceae</taxon>
        <taxon>Mycoplasma</taxon>
    </lineage>
</organism>